<reference key="1">
    <citation type="submission" date="2001-08" db="EMBL/GenBank/DDBJ databases">
        <title>Cysteine knot protein (SP1).</title>
        <authorList>
            <person name="Itoh N."/>
        </authorList>
    </citation>
    <scope>NUCLEOTIDE SEQUENCE [MRNA]</scope>
</reference>
<reference key="2">
    <citation type="journal article" date="2004" name="Nat. Genet.">
        <title>Complete sequencing and characterization of 21,243 full-length human cDNAs.</title>
        <authorList>
            <person name="Ota T."/>
            <person name="Suzuki Y."/>
            <person name="Nishikawa T."/>
            <person name="Otsuki T."/>
            <person name="Sugiyama T."/>
            <person name="Irie R."/>
            <person name="Wakamatsu A."/>
            <person name="Hayashi K."/>
            <person name="Sato H."/>
            <person name="Nagai K."/>
            <person name="Kimura K."/>
            <person name="Makita H."/>
            <person name="Sekine M."/>
            <person name="Obayashi M."/>
            <person name="Nishi T."/>
            <person name="Shibahara T."/>
            <person name="Tanaka T."/>
            <person name="Ishii S."/>
            <person name="Yamamoto J."/>
            <person name="Saito K."/>
            <person name="Kawai Y."/>
            <person name="Isono Y."/>
            <person name="Nakamura Y."/>
            <person name="Nagahari K."/>
            <person name="Murakami K."/>
            <person name="Yasuda T."/>
            <person name="Iwayanagi T."/>
            <person name="Wagatsuma M."/>
            <person name="Shiratori A."/>
            <person name="Sudo H."/>
            <person name="Hosoiri T."/>
            <person name="Kaku Y."/>
            <person name="Kodaira H."/>
            <person name="Kondo H."/>
            <person name="Sugawara M."/>
            <person name="Takahashi M."/>
            <person name="Kanda K."/>
            <person name="Yokoi T."/>
            <person name="Furuya T."/>
            <person name="Kikkawa E."/>
            <person name="Omura Y."/>
            <person name="Abe K."/>
            <person name="Kamihara K."/>
            <person name="Katsuta N."/>
            <person name="Sato K."/>
            <person name="Tanikawa M."/>
            <person name="Yamazaki M."/>
            <person name="Ninomiya K."/>
            <person name="Ishibashi T."/>
            <person name="Yamashita H."/>
            <person name="Murakawa K."/>
            <person name="Fujimori K."/>
            <person name="Tanai H."/>
            <person name="Kimata M."/>
            <person name="Watanabe M."/>
            <person name="Hiraoka S."/>
            <person name="Chiba Y."/>
            <person name="Ishida S."/>
            <person name="Ono Y."/>
            <person name="Takiguchi S."/>
            <person name="Watanabe S."/>
            <person name="Yosida M."/>
            <person name="Hotuta T."/>
            <person name="Kusano J."/>
            <person name="Kanehori K."/>
            <person name="Takahashi-Fujii A."/>
            <person name="Hara H."/>
            <person name="Tanase T.-O."/>
            <person name="Nomura Y."/>
            <person name="Togiya S."/>
            <person name="Komai F."/>
            <person name="Hara R."/>
            <person name="Takeuchi K."/>
            <person name="Arita M."/>
            <person name="Imose N."/>
            <person name="Musashino K."/>
            <person name="Yuuki H."/>
            <person name="Oshima A."/>
            <person name="Sasaki N."/>
            <person name="Aotsuka S."/>
            <person name="Yoshikawa Y."/>
            <person name="Matsunawa H."/>
            <person name="Ichihara T."/>
            <person name="Shiohata N."/>
            <person name="Sano S."/>
            <person name="Moriya S."/>
            <person name="Momiyama H."/>
            <person name="Satoh N."/>
            <person name="Takami S."/>
            <person name="Terashima Y."/>
            <person name="Suzuki O."/>
            <person name="Nakagawa S."/>
            <person name="Senoh A."/>
            <person name="Mizoguchi H."/>
            <person name="Goto Y."/>
            <person name="Shimizu F."/>
            <person name="Wakebe H."/>
            <person name="Hishigaki H."/>
            <person name="Watanabe T."/>
            <person name="Sugiyama A."/>
            <person name="Takemoto M."/>
            <person name="Kawakami B."/>
            <person name="Yamazaki M."/>
            <person name="Watanabe K."/>
            <person name="Kumagai A."/>
            <person name="Itakura S."/>
            <person name="Fukuzumi Y."/>
            <person name="Fujimori Y."/>
            <person name="Komiyama M."/>
            <person name="Tashiro H."/>
            <person name="Tanigami A."/>
            <person name="Fujiwara T."/>
            <person name="Ono T."/>
            <person name="Yamada K."/>
            <person name="Fujii Y."/>
            <person name="Ozaki K."/>
            <person name="Hirao M."/>
            <person name="Ohmori Y."/>
            <person name="Kawabata A."/>
            <person name="Hikiji T."/>
            <person name="Kobatake N."/>
            <person name="Inagaki H."/>
            <person name="Ikema Y."/>
            <person name="Okamoto S."/>
            <person name="Okitani R."/>
            <person name="Kawakami T."/>
            <person name="Noguchi S."/>
            <person name="Itoh T."/>
            <person name="Shigeta K."/>
            <person name="Senba T."/>
            <person name="Matsumura K."/>
            <person name="Nakajima Y."/>
            <person name="Mizuno T."/>
            <person name="Morinaga M."/>
            <person name="Sasaki M."/>
            <person name="Togashi T."/>
            <person name="Oyama M."/>
            <person name="Hata H."/>
            <person name="Watanabe M."/>
            <person name="Komatsu T."/>
            <person name="Mizushima-Sugano J."/>
            <person name="Satoh T."/>
            <person name="Shirai Y."/>
            <person name="Takahashi Y."/>
            <person name="Nakagawa K."/>
            <person name="Okumura K."/>
            <person name="Nagase T."/>
            <person name="Nomura N."/>
            <person name="Kikuchi H."/>
            <person name="Masuho Y."/>
            <person name="Yamashita R."/>
            <person name="Nakai K."/>
            <person name="Yada T."/>
            <person name="Nakamura Y."/>
            <person name="Ohara O."/>
            <person name="Isogai T."/>
            <person name="Sugano S."/>
        </authorList>
    </citation>
    <scope>NUCLEOTIDE SEQUENCE [LARGE SCALE MRNA]</scope>
    <source>
        <tissue>Heart</tissue>
    </source>
</reference>
<reference key="3">
    <citation type="journal article" date="2004" name="Genome Res.">
        <title>The status, quality, and expansion of the NIH full-length cDNA project: the Mammalian Gene Collection (MGC).</title>
        <authorList>
            <consortium name="The MGC Project Team"/>
        </authorList>
    </citation>
    <scope>NUCLEOTIDE SEQUENCE [LARGE SCALE MRNA]</scope>
    <source>
        <tissue>Brain</tissue>
    </source>
</reference>
<reference key="4">
    <citation type="journal article" date="2004" name="Oncol. Rep.">
        <title>Identification and characterization of human CKTSF1B2 and CKTSF1B3 genes in silico.</title>
        <authorList>
            <person name="Katoh M."/>
            <person name="Katoh M."/>
        </authorList>
    </citation>
    <scope>IDENTIFICATION</scope>
</reference>
<reference key="5">
    <citation type="journal article" date="2021" name="EMBO Mol. Med.">
        <title>COCO/DAND5 inhibits developmental and pathological ocular angiogenesis.</title>
        <authorList>
            <person name="Popovic N."/>
            <person name="Hooker E."/>
            <person name="Barabino A."/>
            <person name="Flamier A."/>
            <person name="Provost F."/>
            <person name="Buscarlet M."/>
            <person name="Bernier G."/>
            <person name="Larrivee B."/>
        </authorList>
    </citation>
    <scope>FUNCTION</scope>
    <scope>SUBCELLULAR LOCATION</scope>
    <scope>TISSUE SPECIFICITY</scope>
</reference>
<reference key="6">
    <citation type="journal article" date="2022" name="Cold Spring Harb. Mol. Case Stud.">
        <title>A novel biallelic loss-of-function variant in DAND5 causes heterotaxy syndrome.</title>
        <authorList>
            <person name="Ganapathi M."/>
            <person name="Buchovecky C.M."/>
            <person name="Cristo F."/>
            <person name="Ahimaz P."/>
            <person name="Ruzal-Shapiro C."/>
            <person name="Wou K."/>
            <person name="Inacio J.M."/>
            <person name="Iglesias A."/>
            <person name="Belo J.A."/>
            <person name="Jobanputra V."/>
        </authorList>
    </citation>
    <scope>INVOLVEMENT IN HTX13</scope>
</reference>
<reference key="7">
    <citation type="journal article" date="2022" name="J. Med. Genet.">
        <title>Whole-exome sequencing reveals a monogenic cause in 56% of individuals with laterality disorders and associated congenital heart defects.</title>
        <authorList>
            <person name="Bolkier Y."/>
            <person name="Barel O."/>
            <person name="Marek-Yagel D."/>
            <person name="Atias-Varon D."/>
            <person name="Kagan M."/>
            <person name="Vardi A."/>
            <person name="Mishali D."/>
            <person name="Katz U."/>
            <person name="Salem Y."/>
            <person name="Tirosh-Wagner T."/>
            <person name="Jacobson J.M."/>
            <person name="Raas-Rothschild A."/>
            <person name="Chorin O."/>
            <person name="Eliyahu A."/>
            <person name="Sarouf Y."/>
            <person name="Shlomovitz O."/>
            <person name="Veber A."/>
            <person name="Shalva N."/>
            <person name="Javasky E."/>
            <person name="Ben Moshe Y."/>
            <person name="Staretz-Chacham O."/>
            <person name="Rechavi G."/>
            <person name="Mane S."/>
            <person name="Anikster Y."/>
            <person name="Vivante A."/>
            <person name="Pode-Shakked B."/>
        </authorList>
    </citation>
    <scope>INVOLVEMENT IN HTX13</scope>
</reference>
<comment type="function">
    <text evidence="2 4">Antagonist of the extracellular signaling protein NODAL, which is required for correct left-right patterning during embryonic development (By similarity). Antagonist of BMP and TGF-beta signaling (PubMed:33587337). Independently of its role in left-right axis establishment, plays a role during heart development, possibly through the regulation of TGF-beta/Nodal signaling pathway (By similarity). Displays anti-angiogenic activity by inhibiting endothelial sprouting, migration, and proliferation. Once internalized by endothelial cells, may alter their redox and glycolytic balance (PubMed:33587337).</text>
</comment>
<comment type="subcellular location">
    <subcellularLocation>
        <location evidence="8">Secreted</location>
    </subcellularLocation>
    <text evidence="4">Circulating DAND5 may be uptaken by endothelial cells and transported to mitochondria.</text>
</comment>
<comment type="tissue specificity">
    <text evidence="4">Expressed in the retina, in inner segments of photoreceptors, at or close to the outer plexiform layer and in the ganglion cell layer (at protein level).</text>
</comment>
<comment type="induction">
    <text evidence="2">Down-regulation during the establishment of embryonic left-right axis could be due to translation repression, involving BICC1 and possibly DICER1, and/or transcript degradation, involving BICC1 and the CCR4-NOT complex. Attenuated DAND5 expression lifts repression of NODAL and defines leftness by induction of the left lateral plate mesoderm NODAL signaling cascade.</text>
</comment>
<comment type="disease" evidence="5 6">
    <disease id="DI-06990">
        <name>Heterotaxy, visceral, 13, autosomal</name>
        <acronym>HTX13</acronym>
        <description>A form of visceral heterotaxy, a complex disorder due to disruption of the normal left-right asymmetry of the thoracoabdominal organs. Visceral heterotaxy or situs ambiguus results in randomization of the placement of visceral organs, including the heart, lungs, liver, spleen, and stomach. The organs are oriented randomly with respect to the left-right axis and with respect to one another. It can be associated with a variety of congenital defects including cardiac malformations. HTX13 inheritance is autosomal recessive.</description>
        <dbReference type="MIM" id="621079"/>
    </disease>
    <text>The disease is caused by variants affecting the gene represented in this entry.</text>
</comment>
<comment type="similarity">
    <text evidence="8">Belongs to the DAN family.</text>
</comment>
<dbReference type="EMBL" id="AB070695">
    <property type="protein sequence ID" value="BAC82440.1"/>
    <property type="molecule type" value="mRNA"/>
</dbReference>
<dbReference type="EMBL" id="AK095926">
    <property type="protein sequence ID" value="BAC04651.1"/>
    <property type="molecule type" value="mRNA"/>
</dbReference>
<dbReference type="EMBL" id="BC101800">
    <property type="protein sequence ID" value="AAI01801.1"/>
    <property type="molecule type" value="mRNA"/>
</dbReference>
<dbReference type="EMBL" id="BC113476">
    <property type="protein sequence ID" value="AAI13477.1"/>
    <property type="molecule type" value="mRNA"/>
</dbReference>
<dbReference type="CCDS" id="CCDS12291.1"/>
<dbReference type="RefSeq" id="NP_689867.1">
    <property type="nucleotide sequence ID" value="NM_152654.3"/>
</dbReference>
<dbReference type="FunCoup" id="Q8N907">
    <property type="interactions" value="879"/>
</dbReference>
<dbReference type="IntAct" id="Q8N907">
    <property type="interactions" value="1"/>
</dbReference>
<dbReference type="STRING" id="9606.ENSP00000323155"/>
<dbReference type="DrugBank" id="DB01593">
    <property type="generic name" value="Zinc"/>
</dbReference>
<dbReference type="DrugBank" id="DB14487">
    <property type="generic name" value="Zinc acetate"/>
</dbReference>
<dbReference type="GlyCosmos" id="Q8N907">
    <property type="glycosylation" value="1 site, No reported glycans"/>
</dbReference>
<dbReference type="GlyGen" id="Q8N907">
    <property type="glycosylation" value="1 site"/>
</dbReference>
<dbReference type="iPTMnet" id="Q8N907"/>
<dbReference type="PhosphoSitePlus" id="Q8N907"/>
<dbReference type="BioMuta" id="DAND5"/>
<dbReference type="DMDM" id="74729571"/>
<dbReference type="MassIVE" id="Q8N907"/>
<dbReference type="PaxDb" id="9606-ENSP00000323155"/>
<dbReference type="PeptideAtlas" id="Q8N907"/>
<dbReference type="ProteomicsDB" id="72482"/>
<dbReference type="Antibodypedia" id="26335">
    <property type="antibodies" value="276 antibodies from 22 providers"/>
</dbReference>
<dbReference type="DNASU" id="199699"/>
<dbReference type="Ensembl" id="ENST00000317060.4">
    <property type="protein sequence ID" value="ENSP00000323155.1"/>
    <property type="gene ID" value="ENSG00000179284.6"/>
</dbReference>
<dbReference type="GeneID" id="199699"/>
<dbReference type="KEGG" id="hsa:199699"/>
<dbReference type="MANE-Select" id="ENST00000317060.4">
    <property type="protein sequence ID" value="ENSP00000323155.1"/>
    <property type="RefSeq nucleotide sequence ID" value="NM_152654.3"/>
    <property type="RefSeq protein sequence ID" value="NP_689867.1"/>
</dbReference>
<dbReference type="UCSC" id="uc002mwc.2">
    <property type="organism name" value="human"/>
</dbReference>
<dbReference type="AGR" id="HGNC:26780"/>
<dbReference type="CTD" id="199699"/>
<dbReference type="DisGeNET" id="199699"/>
<dbReference type="GeneCards" id="DAND5"/>
<dbReference type="HGNC" id="HGNC:26780">
    <property type="gene designation" value="DAND5"/>
</dbReference>
<dbReference type="HPA" id="ENSG00000179284">
    <property type="expression patterns" value="Tissue enhanced (choroid plexus, heart muscle)"/>
</dbReference>
<dbReference type="MIM" id="609068">
    <property type="type" value="gene"/>
</dbReference>
<dbReference type="MIM" id="621079">
    <property type="type" value="phenotype"/>
</dbReference>
<dbReference type="neXtProt" id="NX_Q8N907"/>
<dbReference type="OpenTargets" id="ENSG00000179284"/>
<dbReference type="PharmGKB" id="PA134875268"/>
<dbReference type="VEuPathDB" id="HostDB:ENSG00000179284"/>
<dbReference type="eggNOG" id="ENOG502RZ3T">
    <property type="taxonomic scope" value="Eukaryota"/>
</dbReference>
<dbReference type="GeneTree" id="ENSGT00530000063926"/>
<dbReference type="HOGENOM" id="CLU_122900_0_0_1"/>
<dbReference type="InParanoid" id="Q8N907"/>
<dbReference type="OMA" id="PVVLWCR"/>
<dbReference type="OrthoDB" id="10061784at2759"/>
<dbReference type="PAN-GO" id="Q8N907">
    <property type="GO annotations" value="6 GO annotations based on evolutionary models"/>
</dbReference>
<dbReference type="PhylomeDB" id="Q8N907"/>
<dbReference type="TreeFam" id="TF106445"/>
<dbReference type="PathwayCommons" id="Q8N907"/>
<dbReference type="Reactome" id="R-HSA-1181150">
    <property type="pathway name" value="Signaling by NODAL"/>
</dbReference>
<dbReference type="Reactome" id="R-HSA-1433617">
    <property type="pathway name" value="Regulation of signaling by NODAL"/>
</dbReference>
<dbReference type="SignaLink" id="Q8N907"/>
<dbReference type="BioGRID-ORCS" id="199699">
    <property type="hits" value="19 hits in 1146 CRISPR screens"/>
</dbReference>
<dbReference type="ChiTaRS" id="DAND5">
    <property type="organism name" value="human"/>
</dbReference>
<dbReference type="GenomeRNAi" id="199699"/>
<dbReference type="Pharos" id="Q8N907">
    <property type="development level" value="Tbio"/>
</dbReference>
<dbReference type="PRO" id="PR:Q8N907"/>
<dbReference type="Proteomes" id="UP000005640">
    <property type="component" value="Chromosome 19"/>
</dbReference>
<dbReference type="RNAct" id="Q8N907">
    <property type="molecule type" value="protein"/>
</dbReference>
<dbReference type="Bgee" id="ENSG00000179284">
    <property type="expression patterns" value="Expressed in buccal mucosa cell and 70 other cell types or tissues"/>
</dbReference>
<dbReference type="ExpressionAtlas" id="Q8N907">
    <property type="expression patterns" value="baseline and differential"/>
</dbReference>
<dbReference type="GO" id="GO:0005576">
    <property type="term" value="C:extracellular region"/>
    <property type="evidence" value="ECO:0000303"/>
    <property type="project" value="BHF-UCL"/>
</dbReference>
<dbReference type="GO" id="GO:0005615">
    <property type="term" value="C:extracellular space"/>
    <property type="evidence" value="ECO:0000318"/>
    <property type="project" value="GO_Central"/>
</dbReference>
<dbReference type="GO" id="GO:0016015">
    <property type="term" value="F:morphogen activity"/>
    <property type="evidence" value="ECO:0000250"/>
    <property type="project" value="BHF-UCL"/>
</dbReference>
<dbReference type="GO" id="GO:0003283">
    <property type="term" value="P:atrial septum development"/>
    <property type="evidence" value="ECO:0000250"/>
    <property type="project" value="BHF-UCL"/>
</dbReference>
<dbReference type="GO" id="GO:0061371">
    <property type="term" value="P:determination of heart left/right asymmetry"/>
    <property type="evidence" value="ECO:0000250"/>
    <property type="project" value="BHF-UCL"/>
</dbReference>
<dbReference type="GO" id="GO:0003140">
    <property type="term" value="P:determination of left/right asymmetry in lateral mesoderm"/>
    <property type="evidence" value="ECO:0000250"/>
    <property type="project" value="BHF-UCL"/>
</dbReference>
<dbReference type="GO" id="GO:0007368">
    <property type="term" value="P:determination of left/right symmetry"/>
    <property type="evidence" value="ECO:0000250"/>
    <property type="project" value="BHF-UCL"/>
</dbReference>
<dbReference type="GO" id="GO:0030514">
    <property type="term" value="P:negative regulation of BMP signaling pathway"/>
    <property type="evidence" value="ECO:0000250"/>
    <property type="project" value="BHF-UCL"/>
</dbReference>
<dbReference type="GO" id="GO:1900108">
    <property type="term" value="P:negative regulation of nodal signaling pathway"/>
    <property type="evidence" value="ECO:0000250"/>
    <property type="project" value="BHF-UCL"/>
</dbReference>
<dbReference type="GO" id="GO:0030512">
    <property type="term" value="P:negative regulation of transforming growth factor beta receptor signaling pathway"/>
    <property type="evidence" value="ECO:0000250"/>
    <property type="project" value="BHF-UCL"/>
</dbReference>
<dbReference type="GO" id="GO:0038092">
    <property type="term" value="P:nodal signaling pathway"/>
    <property type="evidence" value="ECO:0000303"/>
    <property type="project" value="BHF-UCL"/>
</dbReference>
<dbReference type="GO" id="GO:0035582">
    <property type="term" value="P:sequestering of BMP in extracellular matrix"/>
    <property type="evidence" value="ECO:0000318"/>
    <property type="project" value="GO_Central"/>
</dbReference>
<dbReference type="GO" id="GO:0038101">
    <property type="term" value="P:sequestering of nodal from receptor via nodal binding"/>
    <property type="evidence" value="ECO:0000250"/>
    <property type="project" value="BHF-UCL"/>
</dbReference>
<dbReference type="GO" id="GO:0023019">
    <property type="term" value="P:signal transduction involved in regulation of gene expression"/>
    <property type="evidence" value="ECO:0000318"/>
    <property type="project" value="GO_Central"/>
</dbReference>
<dbReference type="GO" id="GO:0003281">
    <property type="term" value="P:ventricular septum development"/>
    <property type="evidence" value="ECO:0000250"/>
    <property type="project" value="BHF-UCL"/>
</dbReference>
<dbReference type="FunFam" id="2.10.90.10:FF:000045">
    <property type="entry name" value="DAN domain BMP antagonist family member 5"/>
    <property type="match status" value="1"/>
</dbReference>
<dbReference type="Gene3D" id="2.10.90.10">
    <property type="entry name" value="Cystine-knot cytokines"/>
    <property type="match status" value="1"/>
</dbReference>
<dbReference type="InterPro" id="IPR016860">
    <property type="entry name" value="Cerberus"/>
</dbReference>
<dbReference type="InterPro" id="IPR029034">
    <property type="entry name" value="Cystine-knot_cytokine"/>
</dbReference>
<dbReference type="InterPro" id="IPR004133">
    <property type="entry name" value="DAN"/>
</dbReference>
<dbReference type="PANTHER" id="PTHR15273">
    <property type="entry name" value="DAN DOMAIN FAMILY MEMBER 5"/>
    <property type="match status" value="1"/>
</dbReference>
<dbReference type="PANTHER" id="PTHR15273:SF5">
    <property type="entry name" value="DAN DOMAIN FAMILY MEMBER 5"/>
    <property type="match status" value="1"/>
</dbReference>
<dbReference type="Pfam" id="PF03045">
    <property type="entry name" value="DAN"/>
    <property type="match status" value="1"/>
</dbReference>
<dbReference type="PIRSF" id="PIRSF027807">
    <property type="entry name" value="Cerberus"/>
    <property type="match status" value="1"/>
</dbReference>
<feature type="signal peptide" evidence="3">
    <location>
        <begin position="1"/>
        <end position="22"/>
    </location>
</feature>
<feature type="chain" id="PRO_0000311804" description="DAN domain family member 5">
    <location>
        <begin position="23"/>
        <end position="189"/>
    </location>
</feature>
<feature type="domain" description="CTCK">
    <location>
        <begin position="101"/>
        <end position="186"/>
    </location>
</feature>
<feature type="glycosylation site" description="N-linked (GlcNAc...) asparagine" evidence="3">
    <location>
        <position position="38"/>
    </location>
</feature>
<feature type="disulfide bond" evidence="1">
    <location>
        <begin position="101"/>
        <end position="148"/>
    </location>
</feature>
<feature type="disulfide bond" evidence="1">
    <location>
        <begin position="115"/>
        <end position="162"/>
    </location>
</feature>
<feature type="disulfide bond" evidence="1">
    <location>
        <begin position="125"/>
        <end position="183"/>
    </location>
</feature>
<feature type="disulfide bond" evidence="1">
    <location>
        <begin position="129"/>
        <end position="185"/>
    </location>
</feature>
<accession>Q8N907</accession>
<keyword id="KW-1015">Disulfide bond</keyword>
<keyword id="KW-0325">Glycoprotein</keyword>
<keyword id="KW-1056">Heterotaxy</keyword>
<keyword id="KW-1267">Proteomics identification</keyword>
<keyword id="KW-1185">Reference proteome</keyword>
<keyword id="KW-0964">Secreted</keyword>
<keyword id="KW-0732">Signal</keyword>
<proteinExistence type="evidence at protein level"/>
<protein>
    <recommendedName>
        <fullName>DAN domain family member 5</fullName>
    </recommendedName>
    <alternativeName>
        <fullName>Cerberus-like protein 2</fullName>
        <shortName>Cerl-2</shortName>
    </alternativeName>
    <alternativeName>
        <fullName>Cysteine knot superfamily 1, BMP antagonist 3</fullName>
    </alternativeName>
    <alternativeName>
        <fullName>Gremlin-3</fullName>
    </alternativeName>
</protein>
<name>DAND5_HUMAN</name>
<evidence type="ECO:0000250" key="1">
    <source>
        <dbReference type="UniProtKB" id="O60565"/>
    </source>
</evidence>
<evidence type="ECO:0000250" key="2">
    <source>
        <dbReference type="UniProtKB" id="Q76LW6"/>
    </source>
</evidence>
<evidence type="ECO:0000255" key="3"/>
<evidence type="ECO:0000269" key="4">
    <source>
    </source>
</evidence>
<evidence type="ECO:0000269" key="5">
    <source>
    </source>
</evidence>
<evidence type="ECO:0000269" key="6">
    <source>
    </source>
</evidence>
<evidence type="ECO:0000303" key="7">
    <source>
    </source>
</evidence>
<evidence type="ECO:0000305" key="8"/>
<organism>
    <name type="scientific">Homo sapiens</name>
    <name type="common">Human</name>
    <dbReference type="NCBI Taxonomy" id="9606"/>
    <lineage>
        <taxon>Eukaryota</taxon>
        <taxon>Metazoa</taxon>
        <taxon>Chordata</taxon>
        <taxon>Craniata</taxon>
        <taxon>Vertebrata</taxon>
        <taxon>Euteleostomi</taxon>
        <taxon>Mammalia</taxon>
        <taxon>Eutheria</taxon>
        <taxon>Euarchontoglires</taxon>
        <taxon>Primates</taxon>
        <taxon>Haplorrhini</taxon>
        <taxon>Catarrhini</taxon>
        <taxon>Hominidae</taxon>
        <taxon>Homo</taxon>
    </lineage>
</organism>
<sequence length="189" mass="20180">MLLGQLSTLLCLLSGALPTGSGRPEPQSPRPQSWAAANQTWALGPGALPPLVPASALGSWKAFLGLQKARQLGMGRLQRGQDEVAAVTLPLNPQEVIQGMCKAVPFVQVFSRPGCSAIRLRNHLCFGHCSSLYIPGSDPTPLVLCNSCMPARKRWAPVVLWCLTGSSASRRRVKISTMLIEGCHCSPKA</sequence>
<gene>
    <name type="primary">DAND5</name>
    <name type="synonym">CER2</name>
    <name type="synonym">CKTSF1B3</name>
    <name evidence="7" type="synonym">COCO</name>
    <name type="synonym">GREM3</name>
    <name type="synonym">SP1</name>
</gene>